<accession>A3CK90</accession>
<sequence length="312" mass="34260">MIEFEKPNITKIDENKDYGKFVVEPLERGYGTTLGNSLRRVLLASLPGAAVTSINIEGVLHEFDTISGVREDVMQIILNVKGIAVKSYVQDEKIIELDVEGPAEVTAGDILTDSDIEIINPDHYLFTIGEGASFKATMTVNSGRGYVPADENKKDDAPVGTLAVDSIYTPVTKVNYQVEPARVGSNDGFDKLTLEILTNGTIIPEDALGLSARILTEHLNLFTNLTEVAIAADVMKEAEKTSDDRILERTIEELDLSVRSYNCLKRAGINTVFDLTEKSEPEMMKVRNLGRKSLEEVKVKLADLGLGLKNDK</sequence>
<comment type="function">
    <text evidence="1">DNA-dependent RNA polymerase catalyzes the transcription of DNA into RNA using the four ribonucleoside triphosphates as substrates.</text>
</comment>
<comment type="catalytic activity">
    <reaction evidence="1">
        <text>RNA(n) + a ribonucleoside 5'-triphosphate = RNA(n+1) + diphosphate</text>
        <dbReference type="Rhea" id="RHEA:21248"/>
        <dbReference type="Rhea" id="RHEA-COMP:14527"/>
        <dbReference type="Rhea" id="RHEA-COMP:17342"/>
        <dbReference type="ChEBI" id="CHEBI:33019"/>
        <dbReference type="ChEBI" id="CHEBI:61557"/>
        <dbReference type="ChEBI" id="CHEBI:140395"/>
        <dbReference type="EC" id="2.7.7.6"/>
    </reaction>
</comment>
<comment type="subunit">
    <text evidence="1">Homodimer. The RNAP catalytic core consists of 2 alpha, 1 beta, 1 beta' and 1 omega subunit. When a sigma factor is associated with the core the holoenzyme is formed, which can initiate transcription.</text>
</comment>
<comment type="domain">
    <text evidence="1">The N-terminal domain is essential for RNAP assembly and basal transcription, whereas the C-terminal domain is involved in interaction with transcriptional regulators and with upstream promoter elements.</text>
</comment>
<comment type="similarity">
    <text evidence="1">Belongs to the RNA polymerase alpha chain family.</text>
</comment>
<protein>
    <recommendedName>
        <fullName evidence="1">DNA-directed RNA polymerase subunit alpha</fullName>
        <shortName evidence="1">RNAP subunit alpha</shortName>
        <ecNumber evidence="1">2.7.7.6</ecNumber>
    </recommendedName>
    <alternativeName>
        <fullName evidence="1">RNA polymerase subunit alpha</fullName>
    </alternativeName>
    <alternativeName>
        <fullName evidence="1">Transcriptase subunit alpha</fullName>
    </alternativeName>
</protein>
<feature type="chain" id="PRO_0000296873" description="DNA-directed RNA polymerase subunit alpha">
    <location>
        <begin position="1"/>
        <end position="312"/>
    </location>
</feature>
<feature type="region of interest" description="Alpha N-terminal domain (alpha-NTD)" evidence="1">
    <location>
        <begin position="1"/>
        <end position="226"/>
    </location>
</feature>
<feature type="region of interest" description="Alpha C-terminal domain (alpha-CTD)" evidence="1">
    <location>
        <begin position="243"/>
        <end position="312"/>
    </location>
</feature>
<organism>
    <name type="scientific">Streptococcus sanguinis (strain SK36)</name>
    <dbReference type="NCBI Taxonomy" id="388919"/>
    <lineage>
        <taxon>Bacteria</taxon>
        <taxon>Bacillati</taxon>
        <taxon>Bacillota</taxon>
        <taxon>Bacilli</taxon>
        <taxon>Lactobacillales</taxon>
        <taxon>Streptococcaceae</taxon>
        <taxon>Streptococcus</taxon>
    </lineage>
</organism>
<name>RPOA_STRSV</name>
<proteinExistence type="inferred from homology"/>
<dbReference type="EC" id="2.7.7.6" evidence="1"/>
<dbReference type="EMBL" id="CP000387">
    <property type="protein sequence ID" value="ABN43595.1"/>
    <property type="molecule type" value="Genomic_DNA"/>
</dbReference>
<dbReference type="RefSeq" id="WP_002894519.1">
    <property type="nucleotide sequence ID" value="NC_009009.1"/>
</dbReference>
<dbReference type="RefSeq" id="YP_001034145.1">
    <property type="nucleotide sequence ID" value="NC_009009.1"/>
</dbReference>
<dbReference type="SMR" id="A3CK90"/>
<dbReference type="STRING" id="388919.SSA_0132"/>
<dbReference type="KEGG" id="ssa:SSA_0132"/>
<dbReference type="PATRIC" id="fig|388919.9.peg.127"/>
<dbReference type="eggNOG" id="COG0202">
    <property type="taxonomic scope" value="Bacteria"/>
</dbReference>
<dbReference type="HOGENOM" id="CLU_053084_0_1_9"/>
<dbReference type="OrthoDB" id="9805706at2"/>
<dbReference type="Proteomes" id="UP000002148">
    <property type="component" value="Chromosome"/>
</dbReference>
<dbReference type="GO" id="GO:0005737">
    <property type="term" value="C:cytoplasm"/>
    <property type="evidence" value="ECO:0007669"/>
    <property type="project" value="UniProtKB-ARBA"/>
</dbReference>
<dbReference type="GO" id="GO:0000428">
    <property type="term" value="C:DNA-directed RNA polymerase complex"/>
    <property type="evidence" value="ECO:0007669"/>
    <property type="project" value="UniProtKB-KW"/>
</dbReference>
<dbReference type="GO" id="GO:0003677">
    <property type="term" value="F:DNA binding"/>
    <property type="evidence" value="ECO:0007669"/>
    <property type="project" value="UniProtKB-UniRule"/>
</dbReference>
<dbReference type="GO" id="GO:0003899">
    <property type="term" value="F:DNA-directed RNA polymerase activity"/>
    <property type="evidence" value="ECO:0007669"/>
    <property type="project" value="UniProtKB-UniRule"/>
</dbReference>
<dbReference type="GO" id="GO:0046983">
    <property type="term" value="F:protein dimerization activity"/>
    <property type="evidence" value="ECO:0007669"/>
    <property type="project" value="InterPro"/>
</dbReference>
<dbReference type="GO" id="GO:0006351">
    <property type="term" value="P:DNA-templated transcription"/>
    <property type="evidence" value="ECO:0007669"/>
    <property type="project" value="UniProtKB-UniRule"/>
</dbReference>
<dbReference type="CDD" id="cd06928">
    <property type="entry name" value="RNAP_alpha_NTD"/>
    <property type="match status" value="1"/>
</dbReference>
<dbReference type="FunFam" id="1.10.150.20:FF:000001">
    <property type="entry name" value="DNA-directed RNA polymerase subunit alpha"/>
    <property type="match status" value="1"/>
</dbReference>
<dbReference type="FunFam" id="2.170.120.12:FF:000001">
    <property type="entry name" value="DNA-directed RNA polymerase subunit alpha"/>
    <property type="match status" value="1"/>
</dbReference>
<dbReference type="Gene3D" id="1.10.150.20">
    <property type="entry name" value="5' to 3' exonuclease, C-terminal subdomain"/>
    <property type="match status" value="1"/>
</dbReference>
<dbReference type="Gene3D" id="2.170.120.12">
    <property type="entry name" value="DNA-directed RNA polymerase, insert domain"/>
    <property type="match status" value="1"/>
</dbReference>
<dbReference type="Gene3D" id="3.30.1360.10">
    <property type="entry name" value="RNA polymerase, RBP11-like subunit"/>
    <property type="match status" value="1"/>
</dbReference>
<dbReference type="HAMAP" id="MF_00059">
    <property type="entry name" value="RNApol_bact_RpoA"/>
    <property type="match status" value="1"/>
</dbReference>
<dbReference type="InterPro" id="IPR011262">
    <property type="entry name" value="DNA-dir_RNA_pol_insert"/>
</dbReference>
<dbReference type="InterPro" id="IPR011263">
    <property type="entry name" value="DNA-dir_RNA_pol_RpoA/D/Rpb3"/>
</dbReference>
<dbReference type="InterPro" id="IPR011773">
    <property type="entry name" value="DNA-dir_RpoA"/>
</dbReference>
<dbReference type="InterPro" id="IPR036603">
    <property type="entry name" value="RBP11-like"/>
</dbReference>
<dbReference type="InterPro" id="IPR011260">
    <property type="entry name" value="RNAP_asu_C"/>
</dbReference>
<dbReference type="InterPro" id="IPR036643">
    <property type="entry name" value="RNApol_insert_sf"/>
</dbReference>
<dbReference type="NCBIfam" id="NF003513">
    <property type="entry name" value="PRK05182.1-2"/>
    <property type="match status" value="1"/>
</dbReference>
<dbReference type="NCBIfam" id="NF003515">
    <property type="entry name" value="PRK05182.2-1"/>
    <property type="match status" value="1"/>
</dbReference>
<dbReference type="NCBIfam" id="NF003518">
    <property type="entry name" value="PRK05182.2-4"/>
    <property type="match status" value="1"/>
</dbReference>
<dbReference type="NCBIfam" id="NF003519">
    <property type="entry name" value="PRK05182.2-5"/>
    <property type="match status" value="1"/>
</dbReference>
<dbReference type="NCBIfam" id="TIGR02027">
    <property type="entry name" value="rpoA"/>
    <property type="match status" value="1"/>
</dbReference>
<dbReference type="Pfam" id="PF01000">
    <property type="entry name" value="RNA_pol_A_bac"/>
    <property type="match status" value="1"/>
</dbReference>
<dbReference type="Pfam" id="PF03118">
    <property type="entry name" value="RNA_pol_A_CTD"/>
    <property type="match status" value="1"/>
</dbReference>
<dbReference type="Pfam" id="PF01193">
    <property type="entry name" value="RNA_pol_L"/>
    <property type="match status" value="1"/>
</dbReference>
<dbReference type="SMART" id="SM00662">
    <property type="entry name" value="RPOLD"/>
    <property type="match status" value="1"/>
</dbReference>
<dbReference type="SUPFAM" id="SSF47789">
    <property type="entry name" value="C-terminal domain of RNA polymerase alpha subunit"/>
    <property type="match status" value="1"/>
</dbReference>
<dbReference type="SUPFAM" id="SSF56553">
    <property type="entry name" value="Insert subdomain of RNA polymerase alpha subunit"/>
    <property type="match status" value="1"/>
</dbReference>
<dbReference type="SUPFAM" id="SSF55257">
    <property type="entry name" value="RBP11-like subunits of RNA polymerase"/>
    <property type="match status" value="1"/>
</dbReference>
<gene>
    <name evidence="1" type="primary">rpoA</name>
    <name type="ordered locus">SSA_0132</name>
</gene>
<reference key="1">
    <citation type="journal article" date="2007" name="J. Bacteriol.">
        <title>Genome of the opportunistic pathogen Streptococcus sanguinis.</title>
        <authorList>
            <person name="Xu P."/>
            <person name="Alves J.M."/>
            <person name="Kitten T."/>
            <person name="Brown A."/>
            <person name="Chen Z."/>
            <person name="Ozaki L.S."/>
            <person name="Manque P."/>
            <person name="Ge X."/>
            <person name="Serrano M.G."/>
            <person name="Puiu D."/>
            <person name="Hendricks S."/>
            <person name="Wang Y."/>
            <person name="Chaplin M.D."/>
            <person name="Akan D."/>
            <person name="Paik S."/>
            <person name="Peterson D.L."/>
            <person name="Macrina F.L."/>
            <person name="Buck G.A."/>
        </authorList>
    </citation>
    <scope>NUCLEOTIDE SEQUENCE [LARGE SCALE GENOMIC DNA]</scope>
    <source>
        <strain>SK36</strain>
    </source>
</reference>
<keyword id="KW-0240">DNA-directed RNA polymerase</keyword>
<keyword id="KW-0548">Nucleotidyltransferase</keyword>
<keyword id="KW-1185">Reference proteome</keyword>
<keyword id="KW-0804">Transcription</keyword>
<keyword id="KW-0808">Transferase</keyword>
<evidence type="ECO:0000255" key="1">
    <source>
        <dbReference type="HAMAP-Rule" id="MF_00059"/>
    </source>
</evidence>